<dbReference type="EMBL" id="GQ904238">
    <property type="protein sequence ID" value="ADB23454.1"/>
    <property type="molecule type" value="mRNA"/>
</dbReference>
<dbReference type="EMBL" id="AP003286">
    <property type="protein sequence ID" value="BAD81985.1"/>
    <property type="status" value="ALT_INIT"/>
    <property type="molecule type" value="Genomic_DNA"/>
</dbReference>
<dbReference type="EMBL" id="AP008207">
    <property type="protein sequence ID" value="BAF06827.1"/>
    <property type="molecule type" value="Genomic_DNA"/>
</dbReference>
<dbReference type="EMBL" id="AP014957">
    <property type="protein sequence ID" value="BAS75396.1"/>
    <property type="molecule type" value="Genomic_DNA"/>
</dbReference>
<dbReference type="EMBL" id="AK067919">
    <property type="protein sequence ID" value="BAG90665.1"/>
    <property type="molecule type" value="mRNA"/>
</dbReference>
<dbReference type="EMBL" id="U25283">
    <property type="protein sequence ID" value="AAB39320.1"/>
    <property type="status" value="ALT_INIT"/>
    <property type="molecule type" value="mRNA"/>
</dbReference>
<dbReference type="PIR" id="T04353">
    <property type="entry name" value="T04353"/>
</dbReference>
<dbReference type="SMR" id="Q0JHF1"/>
<dbReference type="FunCoup" id="Q0JHF1">
    <property type="interactions" value="848"/>
</dbReference>
<dbReference type="IntAct" id="Q0JHF1">
    <property type="interactions" value="1"/>
</dbReference>
<dbReference type="STRING" id="39947.Q0JHF1"/>
<dbReference type="PaxDb" id="39947-Q0JHF1"/>
<dbReference type="EnsemblPlants" id="Os01t0867300-01">
    <property type="protein sequence ID" value="Os01t0867300-01"/>
    <property type="gene ID" value="Os01g0867300"/>
</dbReference>
<dbReference type="GeneID" id="4325078"/>
<dbReference type="Gramene" id="Os01t0867300-01">
    <property type="protein sequence ID" value="Os01t0867300-01"/>
    <property type="gene ID" value="Os01g0867300"/>
</dbReference>
<dbReference type="KEGG" id="dosa:Os01g0867300"/>
<dbReference type="KEGG" id="osa:4325078"/>
<dbReference type="eggNOG" id="ENOG502RXGY">
    <property type="taxonomic scope" value="Eukaryota"/>
</dbReference>
<dbReference type="HOGENOM" id="CLU_043238_2_2_1"/>
<dbReference type="InParanoid" id="Q0JHF1"/>
<dbReference type="OMA" id="IRRAHSM"/>
<dbReference type="OrthoDB" id="644067at2759"/>
<dbReference type="Proteomes" id="UP000000763">
    <property type="component" value="Chromosome 1"/>
</dbReference>
<dbReference type="Proteomes" id="UP000059680">
    <property type="component" value="Chromosome 1"/>
</dbReference>
<dbReference type="GO" id="GO:0005634">
    <property type="term" value="C:nucleus"/>
    <property type="evidence" value="ECO:0000314"/>
    <property type="project" value="UniProtKB"/>
</dbReference>
<dbReference type="GO" id="GO:0003700">
    <property type="term" value="F:DNA-binding transcription factor activity"/>
    <property type="evidence" value="ECO:0007669"/>
    <property type="project" value="InterPro"/>
</dbReference>
<dbReference type="GO" id="GO:0043565">
    <property type="term" value="F:sequence-specific DNA binding"/>
    <property type="evidence" value="ECO:0000314"/>
    <property type="project" value="UniProtKB"/>
</dbReference>
<dbReference type="GO" id="GO:0009738">
    <property type="term" value="P:abscisic acid-activated signaling pathway"/>
    <property type="evidence" value="ECO:0007669"/>
    <property type="project" value="UniProtKB-KW"/>
</dbReference>
<dbReference type="GO" id="GO:0009789">
    <property type="term" value="P:positive regulation of abscisic acid-activated signaling pathway"/>
    <property type="evidence" value="ECO:0000314"/>
    <property type="project" value="UniProtKB"/>
</dbReference>
<dbReference type="GO" id="GO:0045893">
    <property type="term" value="P:positive regulation of DNA-templated transcription"/>
    <property type="evidence" value="ECO:0000314"/>
    <property type="project" value="UniProtKB"/>
</dbReference>
<dbReference type="GO" id="GO:1901002">
    <property type="term" value="P:positive regulation of response to salt stress"/>
    <property type="evidence" value="ECO:0000315"/>
    <property type="project" value="UniProtKB"/>
</dbReference>
<dbReference type="GO" id="GO:1902584">
    <property type="term" value="P:positive regulation of response to water deprivation"/>
    <property type="evidence" value="ECO:0000315"/>
    <property type="project" value="UniProtKB"/>
</dbReference>
<dbReference type="CDD" id="cd14707">
    <property type="entry name" value="bZIP_plant_BZIP46"/>
    <property type="match status" value="1"/>
</dbReference>
<dbReference type="FunFam" id="1.20.5.170:FF:000036">
    <property type="entry name" value="ABSCISIC ACID-INSENSITIVE 5-like protein 2"/>
    <property type="match status" value="1"/>
</dbReference>
<dbReference type="Gene3D" id="1.20.5.170">
    <property type="match status" value="1"/>
</dbReference>
<dbReference type="InterPro" id="IPR004827">
    <property type="entry name" value="bZIP"/>
</dbReference>
<dbReference type="InterPro" id="IPR043452">
    <property type="entry name" value="BZIP46-like"/>
</dbReference>
<dbReference type="InterPro" id="IPR046347">
    <property type="entry name" value="bZIP_sf"/>
</dbReference>
<dbReference type="PANTHER" id="PTHR22952:SF392">
    <property type="entry name" value="BZIP TRANSCRIPTION FACTOR 12"/>
    <property type="match status" value="1"/>
</dbReference>
<dbReference type="PANTHER" id="PTHR22952">
    <property type="entry name" value="CAMP-RESPONSE ELEMENT BINDING PROTEIN-RELATED"/>
    <property type="match status" value="1"/>
</dbReference>
<dbReference type="Pfam" id="PF00170">
    <property type="entry name" value="bZIP_1"/>
    <property type="match status" value="1"/>
</dbReference>
<dbReference type="SMART" id="SM00338">
    <property type="entry name" value="BRLZ"/>
    <property type="match status" value="1"/>
</dbReference>
<dbReference type="SUPFAM" id="SSF57959">
    <property type="entry name" value="Leucine zipper domain"/>
    <property type="match status" value="1"/>
</dbReference>
<dbReference type="PROSITE" id="PS50217">
    <property type="entry name" value="BZIP"/>
    <property type="match status" value="1"/>
</dbReference>
<dbReference type="PROSITE" id="PS00036">
    <property type="entry name" value="BZIP_BASIC"/>
    <property type="match status" value="1"/>
</dbReference>
<accession>Q0JHF1</accession>
<accession>P93426</accession>
<accession>Q5N952</accession>
<proteinExistence type="evidence at transcript level"/>
<sequence>MMASRVMASSSPSHTASDLARFAAGRGGGGSAGLGSMNVEEILRGIYADMPTPALPLVGGDRPMSPLPAPDVAAAPRTAEEVWKEITGAGVAAAAGGVVPPAAAAAAAPAVVAGAGAGTGAEMTLEDFLAREGAVKEDEAVVTDPSAAKGQVVMGFLNGAEVTGGVTGGRSRKRHLMDPMDRAAMQRQKRMIKNRESAARSRERKQAYIAELESLVTQLEEENAKMFKEQEEQHQKRLKELKEMVVPVIIRKTSARDLRRTNSMEW</sequence>
<gene>
    <name evidence="5" type="primary">BZIP12</name>
    <name evidence="6" type="synonym">ABF1</name>
    <name evidence="8" type="synonym">OSE2</name>
    <name evidence="10" type="ordered locus">Os01g0867300</name>
    <name evidence="7" type="ordered locus">LOC_Os01g64730</name>
    <name evidence="9" type="ORF">P0677H08.2-1</name>
</gene>
<organism>
    <name type="scientific">Oryza sativa subsp. japonica</name>
    <name type="common">Rice</name>
    <dbReference type="NCBI Taxonomy" id="39947"/>
    <lineage>
        <taxon>Eukaryota</taxon>
        <taxon>Viridiplantae</taxon>
        <taxon>Streptophyta</taxon>
        <taxon>Embryophyta</taxon>
        <taxon>Tracheophyta</taxon>
        <taxon>Spermatophyta</taxon>
        <taxon>Magnoliopsida</taxon>
        <taxon>Liliopsida</taxon>
        <taxon>Poales</taxon>
        <taxon>Poaceae</taxon>
        <taxon>BOP clade</taxon>
        <taxon>Oryzoideae</taxon>
        <taxon>Oryzeae</taxon>
        <taxon>Oryzinae</taxon>
        <taxon>Oryza</taxon>
        <taxon>Oryza sativa</taxon>
    </lineage>
</organism>
<evidence type="ECO:0000255" key="1"/>
<evidence type="ECO:0000255" key="2">
    <source>
        <dbReference type="PROSITE-ProRule" id="PRU00978"/>
    </source>
</evidence>
<evidence type="ECO:0000269" key="3">
    <source>
    </source>
</evidence>
<evidence type="ECO:0000269" key="4">
    <source>
    </source>
</evidence>
<evidence type="ECO:0000303" key="5">
    <source>
    </source>
</evidence>
<evidence type="ECO:0000303" key="6">
    <source>
    </source>
</evidence>
<evidence type="ECO:0000305" key="7"/>
<evidence type="ECO:0000312" key="8">
    <source>
        <dbReference type="EMBL" id="AAB39320.1"/>
    </source>
</evidence>
<evidence type="ECO:0000312" key="9">
    <source>
        <dbReference type="EMBL" id="BAD81985.1"/>
    </source>
</evidence>
<evidence type="ECO:0000312" key="10">
    <source>
        <dbReference type="EMBL" id="BAF06827.1"/>
    </source>
</evidence>
<comment type="function">
    <text evidence="3 4">Transcription activator that binds to the ABA-responsive elements (ABREs) in vitro. Involved in abiotic stress responses and abscisic acid (ABA) signaling (PubMed:20039193). Involved in the signaling pathway that induces growth inhibition in response to D-allose (PubMed:23397192).</text>
</comment>
<comment type="subcellular location">
    <subcellularLocation>
        <location evidence="3">Nucleus</location>
    </subcellularLocation>
</comment>
<comment type="induction">
    <text evidence="3 4">Induced by anoxia, drought, salt stress, oxidative stress, cold and abscisic acid (ABA) (PubMed:20039193). Induced by D-allose (PubMed:23397192).</text>
</comment>
<comment type="disruption phenotype">
    <text evidence="3">No visible phenotype under normal growth conditions, but mutant plants exhibit increased sensitivity to salt and drought stresses.</text>
</comment>
<comment type="miscellaneous">
    <text evidence="4">Plants overexpressing BZIP12 exhibit increased sensitivity to D-allose-induced growth inhibition.</text>
</comment>
<comment type="sequence caution" evidence="7">
    <conflict type="erroneous initiation">
        <sequence resource="EMBL-CDS" id="AAB39320"/>
    </conflict>
    <text>Truncated N-terminus.</text>
</comment>
<comment type="sequence caution" evidence="7">
    <conflict type="erroneous initiation">
        <sequence resource="EMBL-CDS" id="BAD81985"/>
    </conflict>
    <text>Truncated N-terminus.</text>
</comment>
<reference key="1">
    <citation type="journal article" date="2010" name="Plant Mol. Biol.">
        <title>The bZIP transcription factor OsABF1 is an ABA responsive element binding factor that enhances abiotic stress signaling in rice.</title>
        <authorList>
            <person name="Amir Hossain M."/>
            <person name="Lee Y."/>
            <person name="Cho J.I."/>
            <person name="Ahn C.H."/>
            <person name="Lee S.K."/>
            <person name="Jeon J.S."/>
            <person name="Kang H."/>
            <person name="Lee C.H."/>
            <person name="An G."/>
            <person name="Park P.B."/>
        </authorList>
    </citation>
    <scope>NUCLEOTIDE SEQUENCE [MRNA]</scope>
    <scope>FUNCTION</scope>
    <scope>INDUCTION</scope>
    <scope>DISRUPTION PHENOTYPE</scope>
</reference>
<reference key="2">
    <citation type="journal article" date="2002" name="Nature">
        <title>The genome sequence and structure of rice chromosome 1.</title>
        <authorList>
            <person name="Sasaki T."/>
            <person name="Matsumoto T."/>
            <person name="Yamamoto K."/>
            <person name="Sakata K."/>
            <person name="Baba T."/>
            <person name="Katayose Y."/>
            <person name="Wu J."/>
            <person name="Niimura Y."/>
            <person name="Cheng Z."/>
            <person name="Nagamura Y."/>
            <person name="Antonio B.A."/>
            <person name="Kanamori H."/>
            <person name="Hosokawa S."/>
            <person name="Masukawa M."/>
            <person name="Arikawa K."/>
            <person name="Chiden Y."/>
            <person name="Hayashi M."/>
            <person name="Okamoto M."/>
            <person name="Ando T."/>
            <person name="Aoki H."/>
            <person name="Arita K."/>
            <person name="Hamada M."/>
            <person name="Harada C."/>
            <person name="Hijishita S."/>
            <person name="Honda M."/>
            <person name="Ichikawa Y."/>
            <person name="Idonuma A."/>
            <person name="Iijima M."/>
            <person name="Ikeda M."/>
            <person name="Ikeno M."/>
            <person name="Ito S."/>
            <person name="Ito T."/>
            <person name="Ito Y."/>
            <person name="Ito Y."/>
            <person name="Iwabuchi A."/>
            <person name="Kamiya K."/>
            <person name="Karasawa W."/>
            <person name="Katagiri S."/>
            <person name="Kikuta A."/>
            <person name="Kobayashi N."/>
            <person name="Kono I."/>
            <person name="Machita K."/>
            <person name="Maehara T."/>
            <person name="Mizuno H."/>
            <person name="Mizubayashi T."/>
            <person name="Mukai Y."/>
            <person name="Nagasaki H."/>
            <person name="Nakashima M."/>
            <person name="Nakama Y."/>
            <person name="Nakamichi Y."/>
            <person name="Nakamura M."/>
            <person name="Namiki N."/>
            <person name="Negishi M."/>
            <person name="Ohta I."/>
            <person name="Ono N."/>
            <person name="Saji S."/>
            <person name="Sakai K."/>
            <person name="Shibata M."/>
            <person name="Shimokawa T."/>
            <person name="Shomura A."/>
            <person name="Song J."/>
            <person name="Takazaki Y."/>
            <person name="Terasawa K."/>
            <person name="Tsuji K."/>
            <person name="Waki K."/>
            <person name="Yamagata H."/>
            <person name="Yamane H."/>
            <person name="Yoshiki S."/>
            <person name="Yoshihara R."/>
            <person name="Yukawa K."/>
            <person name="Zhong H."/>
            <person name="Iwama H."/>
            <person name="Endo T."/>
            <person name="Ito H."/>
            <person name="Hahn J.H."/>
            <person name="Kim H.-I."/>
            <person name="Eun M.-Y."/>
            <person name="Yano M."/>
            <person name="Jiang J."/>
            <person name="Gojobori T."/>
        </authorList>
    </citation>
    <scope>NUCLEOTIDE SEQUENCE [LARGE SCALE GENOMIC DNA]</scope>
    <source>
        <strain>cv. Nipponbare</strain>
    </source>
</reference>
<reference key="3">
    <citation type="journal article" date="2005" name="Nature">
        <title>The map-based sequence of the rice genome.</title>
        <authorList>
            <consortium name="International rice genome sequencing project (IRGSP)"/>
        </authorList>
    </citation>
    <scope>NUCLEOTIDE SEQUENCE [LARGE SCALE GENOMIC DNA]</scope>
    <source>
        <strain>cv. Nipponbare</strain>
    </source>
</reference>
<reference key="4">
    <citation type="journal article" date="2008" name="Nucleic Acids Res.">
        <title>The rice annotation project database (RAP-DB): 2008 update.</title>
        <authorList>
            <consortium name="The rice annotation project (RAP)"/>
        </authorList>
    </citation>
    <scope>GENOME REANNOTATION</scope>
    <source>
        <strain>cv. Nipponbare</strain>
    </source>
</reference>
<reference key="5">
    <citation type="journal article" date="2013" name="Rice">
        <title>Improvement of the Oryza sativa Nipponbare reference genome using next generation sequence and optical map data.</title>
        <authorList>
            <person name="Kawahara Y."/>
            <person name="de la Bastide M."/>
            <person name="Hamilton J.P."/>
            <person name="Kanamori H."/>
            <person name="McCombie W.R."/>
            <person name="Ouyang S."/>
            <person name="Schwartz D.C."/>
            <person name="Tanaka T."/>
            <person name="Wu J."/>
            <person name="Zhou S."/>
            <person name="Childs K.L."/>
            <person name="Davidson R.M."/>
            <person name="Lin H."/>
            <person name="Quesada-Ocampo L."/>
            <person name="Vaillancourt B."/>
            <person name="Sakai H."/>
            <person name="Lee S.S."/>
            <person name="Kim J."/>
            <person name="Numa H."/>
            <person name="Itoh T."/>
            <person name="Buell C.R."/>
            <person name="Matsumoto T."/>
        </authorList>
    </citation>
    <scope>GENOME REANNOTATION</scope>
    <source>
        <strain>cv. Nipponbare</strain>
    </source>
</reference>
<reference key="6">
    <citation type="journal article" date="2003" name="Science">
        <title>Collection, mapping, and annotation of over 28,000 cDNA clones from japonica rice.</title>
        <authorList>
            <consortium name="The rice full-length cDNA consortium"/>
        </authorList>
    </citation>
    <scope>NUCLEOTIDE SEQUENCE [LARGE SCALE MRNA]</scope>
    <source>
        <strain>cv. Nipponbare</strain>
    </source>
</reference>
<reference key="7">
    <citation type="submission" date="1995-04" db="EMBL/GenBank/DDBJ databases">
        <title>Rice early embryogenesis gene.</title>
        <authorList>
            <person name="Hsing Y.C."/>
            <person name="Tsao C.V."/>
            <person name="Chow T."/>
            <person name="Hsieh J."/>
            <person name="Chen Z."/>
        </authorList>
    </citation>
    <scope>NUCLEOTIDE SEQUENCE [MRNA] OF 41-266</scope>
    <source>
        <strain>cv. Tainung 67</strain>
        <tissue>Seed</tissue>
    </source>
</reference>
<reference key="8">
    <citation type="journal article" date="2008" name="Plant Physiol.">
        <title>Genomic survey and gene expression analysis of the basic leucine zipper transcription factor family in rice.</title>
        <authorList>
            <person name="Nijhawan A."/>
            <person name="Jain M."/>
            <person name="Tyagi A.K."/>
            <person name="Khurana J.P."/>
        </authorList>
    </citation>
    <scope>GENE FAMILY</scope>
    <scope>NOMENCLATURE</scope>
</reference>
<reference key="9">
    <citation type="journal article" date="2013" name="Planta">
        <title>Phosphorylation of D-allose by hexokinase involved in regulation of OsABF1 expression for growth inhibition in Oryza sativa L.</title>
        <authorList>
            <person name="Fukumoto T."/>
            <person name="Kano A."/>
            <person name="Ohtani K."/>
            <person name="Inoue M."/>
            <person name="Yoshihara A."/>
            <person name="Izumori K."/>
            <person name="Tajima S."/>
            <person name="Shigematsu Y."/>
            <person name="Tanaka K."/>
            <person name="Ohkouchi T."/>
            <person name="Ishida Y."/>
            <person name="Nishizawa Y."/>
            <person name="Tada Y."/>
            <person name="Ichimura K."/>
            <person name="Gomi K."/>
            <person name="Yoo S.D."/>
            <person name="Sheen J."/>
            <person name="Akimitsu K."/>
        </authorList>
    </citation>
    <scope>FUNCTION</scope>
    <scope>INDUCTION BY D-ALLOSE</scope>
</reference>
<feature type="chain" id="PRO_0000442722" description="bZIP transcription factor 12">
    <location>
        <begin position="1"/>
        <end position="266"/>
    </location>
</feature>
<feature type="domain" description="bZIP" evidence="2">
    <location>
        <begin position="184"/>
        <end position="248"/>
    </location>
</feature>
<feature type="region of interest" description="Basic motif" evidence="2">
    <location>
        <begin position="187"/>
        <end position="205"/>
    </location>
</feature>
<feature type="region of interest" description="Leucine-zipper" evidence="2">
    <location>
        <begin position="212"/>
        <end position="219"/>
    </location>
</feature>
<feature type="coiled-coil region" evidence="1">
    <location>
        <begin position="202"/>
        <end position="244"/>
    </location>
</feature>
<protein>
    <recommendedName>
        <fullName evidence="7">bZIP transcription factor 12</fullName>
        <shortName evidence="5">OsBZIP12</shortName>
    </recommendedName>
    <alternativeName>
        <fullName evidence="7">Abscisic acid responsive elements-binding factor 1</fullName>
        <shortName evidence="6">ABA responsive element binding factor 1</shortName>
        <shortName evidence="7">ABRE-binding factor 1</shortName>
        <shortName evidence="6">OsABF1</shortName>
    </alternativeName>
</protein>
<keyword id="KW-0938">Abscisic acid signaling pathway</keyword>
<keyword id="KW-0010">Activator</keyword>
<keyword id="KW-0175">Coiled coil</keyword>
<keyword id="KW-0238">DNA-binding</keyword>
<keyword id="KW-0539">Nucleus</keyword>
<keyword id="KW-1185">Reference proteome</keyword>
<keyword id="KW-0346">Stress response</keyword>
<keyword id="KW-0804">Transcription</keyword>
<keyword id="KW-0805">Transcription regulation</keyword>
<name>BZP12_ORYSJ</name>